<proteinExistence type="inferred from homology"/>
<name>SSRP_BACAN</name>
<organism>
    <name type="scientific">Bacillus anthracis</name>
    <dbReference type="NCBI Taxonomy" id="1392"/>
    <lineage>
        <taxon>Bacteria</taxon>
        <taxon>Bacillati</taxon>
        <taxon>Bacillota</taxon>
        <taxon>Bacilli</taxon>
        <taxon>Bacillales</taxon>
        <taxon>Bacillaceae</taxon>
        <taxon>Bacillus</taxon>
        <taxon>Bacillus cereus group</taxon>
    </lineage>
</organism>
<protein>
    <recommendedName>
        <fullName evidence="1">SsrA-binding protein</fullName>
    </recommendedName>
    <alternativeName>
        <fullName evidence="1">Small protein B</fullName>
    </alternativeName>
</protein>
<sequence>MPKGSGKVIAQNKKAFHDYFIEETYEAGLVLQGTEIKSIRAGRVNLKDAFARVHNGEVWVHNMHISTYEQGNRFNHDPLRTRKLLLHKKEIEKLAGASKETGYALVPVRIYLKNGFAKMALGLAKGKKQYDKRHDLKEKEAKREIARAFRDRQKM</sequence>
<gene>
    <name evidence="1" type="primary">smpB</name>
    <name type="ordered locus">BA_5332</name>
    <name type="ordered locus">GBAA_5332</name>
    <name type="ordered locus">BAS4955</name>
</gene>
<keyword id="KW-0963">Cytoplasm</keyword>
<keyword id="KW-1185">Reference proteome</keyword>
<keyword id="KW-0694">RNA-binding</keyword>
<feature type="chain" id="PRO_0000102897" description="SsrA-binding protein">
    <location>
        <begin position="1"/>
        <end position="155"/>
    </location>
</feature>
<evidence type="ECO:0000255" key="1">
    <source>
        <dbReference type="HAMAP-Rule" id="MF_00023"/>
    </source>
</evidence>
<reference key="1">
    <citation type="journal article" date="2003" name="Nature">
        <title>The genome sequence of Bacillus anthracis Ames and comparison to closely related bacteria.</title>
        <authorList>
            <person name="Read T.D."/>
            <person name="Peterson S.N."/>
            <person name="Tourasse N.J."/>
            <person name="Baillie L.W."/>
            <person name="Paulsen I.T."/>
            <person name="Nelson K.E."/>
            <person name="Tettelin H."/>
            <person name="Fouts D.E."/>
            <person name="Eisen J.A."/>
            <person name="Gill S.R."/>
            <person name="Holtzapple E.K."/>
            <person name="Okstad O.A."/>
            <person name="Helgason E."/>
            <person name="Rilstone J."/>
            <person name="Wu M."/>
            <person name="Kolonay J.F."/>
            <person name="Beanan M.J."/>
            <person name="Dodson R.J."/>
            <person name="Brinkac L.M."/>
            <person name="Gwinn M.L."/>
            <person name="DeBoy R.T."/>
            <person name="Madpu R."/>
            <person name="Daugherty S.C."/>
            <person name="Durkin A.S."/>
            <person name="Haft D.H."/>
            <person name="Nelson W.C."/>
            <person name="Peterson J.D."/>
            <person name="Pop M."/>
            <person name="Khouri H.M."/>
            <person name="Radune D."/>
            <person name="Benton J.L."/>
            <person name="Mahamoud Y."/>
            <person name="Jiang L."/>
            <person name="Hance I.R."/>
            <person name="Weidman J.F."/>
            <person name="Berry K.J."/>
            <person name="Plaut R.D."/>
            <person name="Wolf A.M."/>
            <person name="Watkins K.L."/>
            <person name="Nierman W.C."/>
            <person name="Hazen A."/>
            <person name="Cline R.T."/>
            <person name="Redmond C."/>
            <person name="Thwaite J.E."/>
            <person name="White O."/>
            <person name="Salzberg S.L."/>
            <person name="Thomason B."/>
            <person name="Friedlander A.M."/>
            <person name="Koehler T.M."/>
            <person name="Hanna P.C."/>
            <person name="Kolstoe A.-B."/>
            <person name="Fraser C.M."/>
        </authorList>
    </citation>
    <scope>NUCLEOTIDE SEQUENCE [LARGE SCALE GENOMIC DNA]</scope>
    <source>
        <strain>Ames / isolate Porton</strain>
    </source>
</reference>
<reference key="2">
    <citation type="journal article" date="2009" name="J. Bacteriol.">
        <title>The complete genome sequence of Bacillus anthracis Ames 'Ancestor'.</title>
        <authorList>
            <person name="Ravel J."/>
            <person name="Jiang L."/>
            <person name="Stanley S.T."/>
            <person name="Wilson M.R."/>
            <person name="Decker R.S."/>
            <person name="Read T.D."/>
            <person name="Worsham P."/>
            <person name="Keim P.S."/>
            <person name="Salzberg S.L."/>
            <person name="Fraser-Liggett C.M."/>
            <person name="Rasko D.A."/>
        </authorList>
    </citation>
    <scope>NUCLEOTIDE SEQUENCE [LARGE SCALE GENOMIC DNA]</scope>
    <source>
        <strain>Ames ancestor</strain>
    </source>
</reference>
<reference key="3">
    <citation type="submission" date="2004-01" db="EMBL/GenBank/DDBJ databases">
        <title>Complete genome sequence of Bacillus anthracis Sterne.</title>
        <authorList>
            <person name="Brettin T.S."/>
            <person name="Bruce D."/>
            <person name="Challacombe J.F."/>
            <person name="Gilna P."/>
            <person name="Han C."/>
            <person name="Hill K."/>
            <person name="Hitchcock P."/>
            <person name="Jackson P."/>
            <person name="Keim P."/>
            <person name="Longmire J."/>
            <person name="Lucas S."/>
            <person name="Okinaka R."/>
            <person name="Richardson P."/>
            <person name="Rubin E."/>
            <person name="Tice H."/>
        </authorList>
    </citation>
    <scope>NUCLEOTIDE SEQUENCE [LARGE SCALE GENOMIC DNA]</scope>
    <source>
        <strain>Sterne</strain>
    </source>
</reference>
<comment type="function">
    <text evidence="1">Required for rescue of stalled ribosomes mediated by trans-translation. Binds to transfer-messenger RNA (tmRNA), required for stable association of tmRNA with ribosomes. tmRNA and SmpB together mimic tRNA shape, replacing the anticodon stem-loop with SmpB. tmRNA is encoded by the ssrA gene; the 2 termini fold to resemble tRNA(Ala) and it encodes a 'tag peptide', a short internal open reading frame. During trans-translation Ala-aminoacylated tmRNA acts like a tRNA, entering the A-site of stalled ribosomes, displacing the stalled mRNA. The ribosome then switches to translate the ORF on the tmRNA; the nascent peptide is terminated with the 'tag peptide' encoded by the tmRNA and targeted for degradation. The ribosome is freed to recommence translation, which seems to be the essential function of trans-translation.</text>
</comment>
<comment type="subcellular location">
    <subcellularLocation>
        <location evidence="1">Cytoplasm</location>
    </subcellularLocation>
    <text evidence="1">The tmRNA-SmpB complex associates with stalled 70S ribosomes.</text>
</comment>
<comment type="similarity">
    <text evidence="1">Belongs to the SmpB family.</text>
</comment>
<accession>Q81XA8</accession>
<accession>Q6HR43</accession>
<accession>Q6KKG0</accession>
<dbReference type="EMBL" id="AE016879">
    <property type="protein sequence ID" value="AAP28994.1"/>
    <property type="molecule type" value="Genomic_DNA"/>
</dbReference>
<dbReference type="EMBL" id="AE017334">
    <property type="protein sequence ID" value="AAT34465.1"/>
    <property type="molecule type" value="Genomic_DNA"/>
</dbReference>
<dbReference type="EMBL" id="AE017225">
    <property type="protein sequence ID" value="AAT57245.1"/>
    <property type="molecule type" value="Genomic_DNA"/>
</dbReference>
<dbReference type="RefSeq" id="NP_847508.1">
    <property type="nucleotide sequence ID" value="NC_003997.3"/>
</dbReference>
<dbReference type="RefSeq" id="WP_001123905.1">
    <property type="nucleotide sequence ID" value="NZ_WXXJ01000007.1"/>
</dbReference>
<dbReference type="RefSeq" id="YP_031195.1">
    <property type="nucleotide sequence ID" value="NC_005945.1"/>
</dbReference>
<dbReference type="SMR" id="Q81XA8"/>
<dbReference type="STRING" id="261594.GBAA_5332"/>
<dbReference type="DNASU" id="1084836"/>
<dbReference type="GeneID" id="45024939"/>
<dbReference type="KEGG" id="ban:BA_5332"/>
<dbReference type="KEGG" id="bar:GBAA_5332"/>
<dbReference type="KEGG" id="bat:BAS4955"/>
<dbReference type="PATRIC" id="fig|198094.11.peg.5292"/>
<dbReference type="eggNOG" id="COG0691">
    <property type="taxonomic scope" value="Bacteria"/>
</dbReference>
<dbReference type="HOGENOM" id="CLU_108953_0_0_9"/>
<dbReference type="OMA" id="WTNHSAR"/>
<dbReference type="OrthoDB" id="9805462at2"/>
<dbReference type="Proteomes" id="UP000000427">
    <property type="component" value="Chromosome"/>
</dbReference>
<dbReference type="Proteomes" id="UP000000594">
    <property type="component" value="Chromosome"/>
</dbReference>
<dbReference type="GO" id="GO:0005829">
    <property type="term" value="C:cytosol"/>
    <property type="evidence" value="ECO:0007669"/>
    <property type="project" value="TreeGrafter"/>
</dbReference>
<dbReference type="GO" id="GO:0003723">
    <property type="term" value="F:RNA binding"/>
    <property type="evidence" value="ECO:0007669"/>
    <property type="project" value="UniProtKB-UniRule"/>
</dbReference>
<dbReference type="GO" id="GO:0070929">
    <property type="term" value="P:trans-translation"/>
    <property type="evidence" value="ECO:0007669"/>
    <property type="project" value="UniProtKB-UniRule"/>
</dbReference>
<dbReference type="CDD" id="cd09294">
    <property type="entry name" value="SmpB"/>
    <property type="match status" value="1"/>
</dbReference>
<dbReference type="Gene3D" id="2.40.280.10">
    <property type="match status" value="1"/>
</dbReference>
<dbReference type="HAMAP" id="MF_00023">
    <property type="entry name" value="SmpB"/>
    <property type="match status" value="1"/>
</dbReference>
<dbReference type="InterPro" id="IPR023620">
    <property type="entry name" value="SmpB"/>
</dbReference>
<dbReference type="InterPro" id="IPR000037">
    <property type="entry name" value="SsrA-bd_prot"/>
</dbReference>
<dbReference type="InterPro" id="IPR020081">
    <property type="entry name" value="SsrA-bd_prot_CS"/>
</dbReference>
<dbReference type="NCBIfam" id="NF003843">
    <property type="entry name" value="PRK05422.1"/>
    <property type="match status" value="1"/>
</dbReference>
<dbReference type="NCBIfam" id="TIGR00086">
    <property type="entry name" value="smpB"/>
    <property type="match status" value="1"/>
</dbReference>
<dbReference type="PANTHER" id="PTHR30308:SF2">
    <property type="entry name" value="SSRA-BINDING PROTEIN"/>
    <property type="match status" value="1"/>
</dbReference>
<dbReference type="PANTHER" id="PTHR30308">
    <property type="entry name" value="TMRNA-BINDING COMPONENT OF TRANS-TRANSLATION TAGGING COMPLEX"/>
    <property type="match status" value="1"/>
</dbReference>
<dbReference type="Pfam" id="PF01668">
    <property type="entry name" value="SmpB"/>
    <property type="match status" value="1"/>
</dbReference>
<dbReference type="SUPFAM" id="SSF74982">
    <property type="entry name" value="Small protein B (SmpB)"/>
    <property type="match status" value="1"/>
</dbReference>
<dbReference type="PROSITE" id="PS01317">
    <property type="entry name" value="SSRP"/>
    <property type="match status" value="1"/>
</dbReference>